<organism>
    <name type="scientific">Helicobacter pylori (strain J99 / ATCC 700824)</name>
    <name type="common">Campylobacter pylori J99</name>
    <dbReference type="NCBI Taxonomy" id="85963"/>
    <lineage>
        <taxon>Bacteria</taxon>
        <taxon>Pseudomonadati</taxon>
        <taxon>Campylobacterota</taxon>
        <taxon>Epsilonproteobacteria</taxon>
        <taxon>Campylobacterales</taxon>
        <taxon>Helicobacteraceae</taxon>
        <taxon>Helicobacter</taxon>
    </lineage>
</organism>
<proteinExistence type="inferred from homology"/>
<keyword id="KW-1003">Cell membrane</keyword>
<keyword id="KW-0472">Membrane</keyword>
<keyword id="KW-0653">Protein transport</keyword>
<keyword id="KW-0811">Translocation</keyword>
<keyword id="KW-0812">Transmembrane</keyword>
<keyword id="KW-1133">Transmembrane helix</keyword>
<keyword id="KW-0813">Transport</keyword>
<name>SECG_HELPJ</name>
<gene>
    <name type="primary">secG</name>
    <name type="ordered locus">jhp_1176</name>
</gene>
<sequence length="198" mass="21408">MTSALLGLQIVLAVLIVVVVLLQKSSSIGLGAYSGSNDSLFGAKGPASFMAKLTMFLGLLFVINTIALGYFYNKEYGKSVLDETKTNKELSPLVPATGTLNPTLNPTLNPTLNPLEQAPTNPLMPTQTPKELPKEPAKTPFVESPKQNEKNEKNDAKENGIKGVEKNKENAKTPPTTHQKPKTHATTNAHTNQKKDEK</sequence>
<evidence type="ECO:0000250" key="1"/>
<evidence type="ECO:0000255" key="2"/>
<evidence type="ECO:0000256" key="3">
    <source>
        <dbReference type="SAM" id="MobiDB-lite"/>
    </source>
</evidence>
<evidence type="ECO:0000305" key="4"/>
<accession>Q9ZJX2</accession>
<protein>
    <recommendedName>
        <fullName>Protein-export membrane protein SecG</fullName>
    </recommendedName>
</protein>
<feature type="chain" id="PRO_0000157230" description="Protein-export membrane protein SecG">
    <location>
        <begin position="1"/>
        <end position="198"/>
    </location>
</feature>
<feature type="transmembrane region" description="Helical" evidence="2">
    <location>
        <begin position="2"/>
        <end position="22"/>
    </location>
</feature>
<feature type="transmembrane region" description="Helical" evidence="2">
    <location>
        <begin position="49"/>
        <end position="69"/>
    </location>
</feature>
<feature type="region of interest" description="Disordered" evidence="3">
    <location>
        <begin position="92"/>
        <end position="198"/>
    </location>
</feature>
<feature type="compositionally biased region" description="Low complexity" evidence="3">
    <location>
        <begin position="99"/>
        <end position="115"/>
    </location>
</feature>
<feature type="compositionally biased region" description="Polar residues" evidence="3">
    <location>
        <begin position="118"/>
        <end position="129"/>
    </location>
</feature>
<feature type="compositionally biased region" description="Basic and acidic residues" evidence="3">
    <location>
        <begin position="146"/>
        <end position="171"/>
    </location>
</feature>
<comment type="function">
    <text evidence="1">Involved in protein export. Participates in an early event of protein translocation (By similarity).</text>
</comment>
<comment type="subcellular location">
    <subcellularLocation>
        <location evidence="1">Cell membrane</location>
        <topology evidence="1">Multi-pass membrane protein</topology>
    </subcellularLocation>
</comment>
<comment type="similarity">
    <text evidence="4">Belongs to the SecG family.</text>
</comment>
<reference key="1">
    <citation type="journal article" date="1999" name="Nature">
        <title>Genomic sequence comparison of two unrelated isolates of the human gastric pathogen Helicobacter pylori.</title>
        <authorList>
            <person name="Alm R.A."/>
            <person name="Ling L.-S.L."/>
            <person name="Moir D.T."/>
            <person name="King B.L."/>
            <person name="Brown E.D."/>
            <person name="Doig P.C."/>
            <person name="Smith D.R."/>
            <person name="Noonan B."/>
            <person name="Guild B.C."/>
            <person name="deJonge B.L."/>
            <person name="Carmel G."/>
            <person name="Tummino P.J."/>
            <person name="Caruso A."/>
            <person name="Uria-Nickelsen M."/>
            <person name="Mills D.M."/>
            <person name="Ives C."/>
            <person name="Gibson R."/>
            <person name="Merberg D."/>
            <person name="Mills S.D."/>
            <person name="Jiang Q."/>
            <person name="Taylor D.E."/>
            <person name="Vovis G.F."/>
            <person name="Trust T.J."/>
        </authorList>
    </citation>
    <scope>NUCLEOTIDE SEQUENCE [LARGE SCALE GENOMIC DNA]</scope>
    <source>
        <strain>J99 / ATCC 700824</strain>
    </source>
</reference>
<dbReference type="EMBL" id="AE001439">
    <property type="protein sequence ID" value="AAD06774.1"/>
    <property type="molecule type" value="Genomic_DNA"/>
</dbReference>
<dbReference type="PIR" id="E71837">
    <property type="entry name" value="E71837"/>
</dbReference>
<dbReference type="RefSeq" id="WP_010882616.1">
    <property type="nucleotide sequence ID" value="NC_000921.1"/>
</dbReference>
<dbReference type="KEGG" id="hpj:jhp_1176"/>
<dbReference type="PATRIC" id="fig|85963.30.peg.1396"/>
<dbReference type="eggNOG" id="COG1314">
    <property type="taxonomic scope" value="Bacteria"/>
</dbReference>
<dbReference type="Proteomes" id="UP000000804">
    <property type="component" value="Chromosome"/>
</dbReference>
<dbReference type="GO" id="GO:0005886">
    <property type="term" value="C:plasma membrane"/>
    <property type="evidence" value="ECO:0007669"/>
    <property type="project" value="UniProtKB-SubCell"/>
</dbReference>
<dbReference type="GO" id="GO:0015450">
    <property type="term" value="F:protein-transporting ATPase activity"/>
    <property type="evidence" value="ECO:0007669"/>
    <property type="project" value="InterPro"/>
</dbReference>
<dbReference type="GO" id="GO:0065002">
    <property type="term" value="P:intracellular protein transmembrane transport"/>
    <property type="evidence" value="ECO:0007669"/>
    <property type="project" value="TreeGrafter"/>
</dbReference>
<dbReference type="GO" id="GO:0009306">
    <property type="term" value="P:protein secretion"/>
    <property type="evidence" value="ECO:0007669"/>
    <property type="project" value="InterPro"/>
</dbReference>
<dbReference type="GO" id="GO:0043952">
    <property type="term" value="P:protein transport by the Sec complex"/>
    <property type="evidence" value="ECO:0007669"/>
    <property type="project" value="TreeGrafter"/>
</dbReference>
<dbReference type="InterPro" id="IPR004692">
    <property type="entry name" value="SecG"/>
</dbReference>
<dbReference type="NCBIfam" id="TIGR00810">
    <property type="entry name" value="secG"/>
    <property type="match status" value="1"/>
</dbReference>
<dbReference type="PANTHER" id="PTHR34182">
    <property type="entry name" value="PROTEIN-EXPORT MEMBRANE PROTEIN SECG"/>
    <property type="match status" value="1"/>
</dbReference>
<dbReference type="PANTHER" id="PTHR34182:SF1">
    <property type="entry name" value="PROTEIN-EXPORT MEMBRANE PROTEIN SECG"/>
    <property type="match status" value="1"/>
</dbReference>
<dbReference type="Pfam" id="PF03840">
    <property type="entry name" value="SecG"/>
    <property type="match status" value="1"/>
</dbReference>
<dbReference type="PRINTS" id="PR01651">
    <property type="entry name" value="SECGEXPORT"/>
</dbReference>